<name>CARB_VIBVU</name>
<comment type="function">
    <text evidence="1">Large subunit of the glutamine-dependent carbamoyl phosphate synthetase (CPSase). CPSase catalyzes the formation of carbamoyl phosphate from the ammonia moiety of glutamine, carbonate, and phosphate donated by ATP, constituting the first step of 2 biosynthetic pathways, one leading to arginine and/or urea and the other to pyrimidine nucleotides. The large subunit (synthetase) binds the substrates ammonia (free or transferred from glutamine from the small subunit), hydrogencarbonate and ATP and carries out an ATP-coupled ligase reaction, activating hydrogencarbonate by forming carboxy phosphate which reacts with ammonia to form carbamoyl phosphate.</text>
</comment>
<comment type="catalytic activity">
    <reaction evidence="1">
        <text>hydrogencarbonate + L-glutamine + 2 ATP + H2O = carbamoyl phosphate + L-glutamate + 2 ADP + phosphate + 2 H(+)</text>
        <dbReference type="Rhea" id="RHEA:18633"/>
        <dbReference type="ChEBI" id="CHEBI:15377"/>
        <dbReference type="ChEBI" id="CHEBI:15378"/>
        <dbReference type="ChEBI" id="CHEBI:17544"/>
        <dbReference type="ChEBI" id="CHEBI:29985"/>
        <dbReference type="ChEBI" id="CHEBI:30616"/>
        <dbReference type="ChEBI" id="CHEBI:43474"/>
        <dbReference type="ChEBI" id="CHEBI:58228"/>
        <dbReference type="ChEBI" id="CHEBI:58359"/>
        <dbReference type="ChEBI" id="CHEBI:456216"/>
        <dbReference type="EC" id="6.3.5.5"/>
    </reaction>
</comment>
<comment type="catalytic activity">
    <molecule>Carbamoyl phosphate synthase large chain</molecule>
    <reaction evidence="1">
        <text>hydrogencarbonate + NH4(+) + 2 ATP = carbamoyl phosphate + 2 ADP + phosphate + 2 H(+)</text>
        <dbReference type="Rhea" id="RHEA:18029"/>
        <dbReference type="ChEBI" id="CHEBI:15378"/>
        <dbReference type="ChEBI" id="CHEBI:17544"/>
        <dbReference type="ChEBI" id="CHEBI:28938"/>
        <dbReference type="ChEBI" id="CHEBI:30616"/>
        <dbReference type="ChEBI" id="CHEBI:43474"/>
        <dbReference type="ChEBI" id="CHEBI:58228"/>
        <dbReference type="ChEBI" id="CHEBI:456216"/>
        <dbReference type="EC" id="6.3.4.16"/>
    </reaction>
</comment>
<comment type="cofactor">
    <cofactor evidence="1">
        <name>Mg(2+)</name>
        <dbReference type="ChEBI" id="CHEBI:18420"/>
    </cofactor>
    <cofactor evidence="1">
        <name>Mn(2+)</name>
        <dbReference type="ChEBI" id="CHEBI:29035"/>
    </cofactor>
    <text evidence="1">Binds 4 Mg(2+) or Mn(2+) ions per subunit.</text>
</comment>
<comment type="pathway">
    <text evidence="1">Amino-acid biosynthesis; L-arginine biosynthesis; carbamoyl phosphate from bicarbonate: step 1/1.</text>
</comment>
<comment type="pathway">
    <text evidence="1">Pyrimidine metabolism; UMP biosynthesis via de novo pathway; (S)-dihydroorotate from bicarbonate: step 1/3.</text>
</comment>
<comment type="subunit">
    <text evidence="1">Composed of two chains; the small (or glutamine) chain promotes the hydrolysis of glutamine to ammonia, which is used by the large (or ammonia) chain to synthesize carbamoyl phosphate. Tetramer of heterodimers (alpha,beta)4.</text>
</comment>
<comment type="domain">
    <text evidence="1">The large subunit is composed of 2 ATP-grasp domains that are involved in binding the 2 ATP molecules needed for carbamoyl phosphate synthesis. The N-terminal ATP-grasp domain (referred to as the carboxyphosphate synthetic component) catalyzes the ATP-dependent phosphorylation of hydrogencarbonate to carboxyphosphate and the subsequent nucleophilic attack by ammonia to form a carbamate intermediate. The C-terminal ATP-grasp domain (referred to as the carbamoyl phosphate synthetic component) then catalyzes the phosphorylation of carbamate with the second ATP to form the end product carbamoyl phosphate. The reactive and unstable enzyme intermediates are sequentially channeled from one active site to the next through the interior of the protein over a distance of at least 96 A.</text>
</comment>
<comment type="similarity">
    <text evidence="1">Belongs to the CarB family.</text>
</comment>
<sequence length="1077" mass="117916">MPKRTDIQSILILGAGPIVIGQACEFDYSGAQACKALREEGYRVILVNSNPATIMTDPDMADATYIEPIQWEVVRKIIEKERPDAVLPTMGGQTALNCALALEKHGVLAEFGVEMIGATADAIDKAEDRSRFDKAMKSIGLECPRADTAKTMEEAYKVLDMVGFPCIIRPSFTMGGTGGGIAYNKEEFEEICRRGLDLSPTNELLIDESLIGWKEYEMEVVRDKADNCIIVCSIENFDPMGIHTGDSITVAPAQTLTDKEYQLMRNASLAVLREIGVETGGSNVQFGINPKDGRMVIIEMNPRVSRSSALASKATGFPIAKIAAKLAVGFTLDELQNDITGGATPASFEPTIDYVVTKIPRFNFEKFAGANDRLTTQMKSVGEVMAIGRNQQESLHKALRGLEVGATGFDEMVDLDSPDALTKIRHELKEAGAERIWYIADAFRAGMSVDGVFNLTNIDRWFLVQIEEIVKLEEQVKAGGFAGLTQDVLRQMKRKGFSDARLSKLLGVAESEIRRLRDQFDIHPVYKRVDTCAAEFSSDTAYMYSSYDDECEANPTDKEKIMVLGGGPNRIGQGIEFDYCCVHASLALREDGYETIMVNCNPETVSTDYDTSDRLYFEPVTLEDVLAIARVEKPKGVIVQYGGQTPLKLARALEAAGVPIIGTSPDAIDRAEDRERFQQAVDRLGLLQPENATVTTMEQAVEKSREIGFPLVVRPSYVLGGRAMEIVYDEQDLRRYFNEAVSVSNESPVLLDRFLDDAIEVDIDAICDGERVVIGGIMEHIEQAGVHSGDSACSLPAYTLSQEIQDKMREQVEKLAFELGVRGLMNTQFAVKDNEVYLIEVNPRAARTVPFVSKATGAPLAKIAARVMAGQSLESQGFTKEIIPPYYSVKEVVLPFNKFPGVDPLLGPEMRSTGEVMGVGATFAEAYAKAELGCGNVYPEGGRALLSVREGDKQRVVDLASKLLKLGYKLDATHGTAVILGEAGINPRLVNKVHEGRPHILDRIKNNEYTYIVNTAAGRQAIEDSKVLRRGALAEKVNYTTTLNAAFATCMSHTADAKASVTSVQELHAQVQASLKA</sequence>
<keyword id="KW-0028">Amino-acid biosynthesis</keyword>
<keyword id="KW-0055">Arginine biosynthesis</keyword>
<keyword id="KW-0067">ATP-binding</keyword>
<keyword id="KW-0436">Ligase</keyword>
<keyword id="KW-0460">Magnesium</keyword>
<keyword id="KW-0464">Manganese</keyword>
<keyword id="KW-0479">Metal-binding</keyword>
<keyword id="KW-0547">Nucleotide-binding</keyword>
<keyword id="KW-0665">Pyrimidine biosynthesis</keyword>
<keyword id="KW-0677">Repeat</keyword>
<reference key="1">
    <citation type="submission" date="2002-12" db="EMBL/GenBank/DDBJ databases">
        <title>Complete genome sequence of Vibrio vulnificus CMCP6.</title>
        <authorList>
            <person name="Rhee J.H."/>
            <person name="Kim S.Y."/>
            <person name="Chung S.S."/>
            <person name="Kim J.J."/>
            <person name="Moon Y.H."/>
            <person name="Jeong H."/>
            <person name="Choy H.E."/>
        </authorList>
    </citation>
    <scope>NUCLEOTIDE SEQUENCE [LARGE SCALE GENOMIC DNA]</scope>
    <source>
        <strain>CMCP6</strain>
    </source>
</reference>
<proteinExistence type="inferred from homology"/>
<dbReference type="EC" id="6.3.4.16" evidence="1"/>
<dbReference type="EC" id="6.3.5.5" evidence="1"/>
<dbReference type="EMBL" id="AE016795">
    <property type="protein sequence ID" value="AAO09082.1"/>
    <property type="molecule type" value="Genomic_DNA"/>
</dbReference>
<dbReference type="RefSeq" id="WP_011078652.1">
    <property type="nucleotide sequence ID" value="NC_004459.3"/>
</dbReference>
<dbReference type="SMR" id="Q8DEM2"/>
<dbReference type="KEGG" id="vvu:VV1_0565"/>
<dbReference type="HOGENOM" id="CLU_000513_1_0_6"/>
<dbReference type="UniPathway" id="UPA00068">
    <property type="reaction ID" value="UER00171"/>
</dbReference>
<dbReference type="UniPathway" id="UPA00070">
    <property type="reaction ID" value="UER00115"/>
</dbReference>
<dbReference type="Proteomes" id="UP000002275">
    <property type="component" value="Chromosome 1"/>
</dbReference>
<dbReference type="GO" id="GO:0005737">
    <property type="term" value="C:cytoplasm"/>
    <property type="evidence" value="ECO:0007669"/>
    <property type="project" value="TreeGrafter"/>
</dbReference>
<dbReference type="GO" id="GO:0005524">
    <property type="term" value="F:ATP binding"/>
    <property type="evidence" value="ECO:0007669"/>
    <property type="project" value="UniProtKB-UniRule"/>
</dbReference>
<dbReference type="GO" id="GO:0004087">
    <property type="term" value="F:carbamoyl-phosphate synthase (ammonia) activity"/>
    <property type="evidence" value="ECO:0007669"/>
    <property type="project" value="RHEA"/>
</dbReference>
<dbReference type="GO" id="GO:0004088">
    <property type="term" value="F:carbamoyl-phosphate synthase (glutamine-hydrolyzing) activity"/>
    <property type="evidence" value="ECO:0007669"/>
    <property type="project" value="UniProtKB-UniRule"/>
</dbReference>
<dbReference type="GO" id="GO:0046872">
    <property type="term" value="F:metal ion binding"/>
    <property type="evidence" value="ECO:0007669"/>
    <property type="project" value="UniProtKB-KW"/>
</dbReference>
<dbReference type="GO" id="GO:0044205">
    <property type="term" value="P:'de novo' UMP biosynthetic process"/>
    <property type="evidence" value="ECO:0007669"/>
    <property type="project" value="UniProtKB-UniRule"/>
</dbReference>
<dbReference type="GO" id="GO:0006541">
    <property type="term" value="P:glutamine metabolic process"/>
    <property type="evidence" value="ECO:0007669"/>
    <property type="project" value="TreeGrafter"/>
</dbReference>
<dbReference type="GO" id="GO:0006526">
    <property type="term" value="P:L-arginine biosynthetic process"/>
    <property type="evidence" value="ECO:0007669"/>
    <property type="project" value="UniProtKB-UniRule"/>
</dbReference>
<dbReference type="CDD" id="cd01424">
    <property type="entry name" value="MGS_CPS_II"/>
    <property type="match status" value="1"/>
</dbReference>
<dbReference type="FunFam" id="1.10.1030.10:FF:000002">
    <property type="entry name" value="Carbamoyl-phosphate synthase large chain"/>
    <property type="match status" value="1"/>
</dbReference>
<dbReference type="FunFam" id="3.30.1490.20:FF:000001">
    <property type="entry name" value="Carbamoyl-phosphate synthase large chain"/>
    <property type="match status" value="1"/>
</dbReference>
<dbReference type="FunFam" id="3.30.470.20:FF:000007">
    <property type="entry name" value="Carbamoyl-phosphate synthase large chain"/>
    <property type="match status" value="1"/>
</dbReference>
<dbReference type="FunFam" id="3.30.470.20:FF:000013">
    <property type="entry name" value="Carbamoyl-phosphate synthase large chain"/>
    <property type="match status" value="1"/>
</dbReference>
<dbReference type="FunFam" id="3.40.50.1380:FF:000004">
    <property type="entry name" value="Carbamoyl-phosphate synthase large chain"/>
    <property type="match status" value="1"/>
</dbReference>
<dbReference type="FunFam" id="3.40.50.20:FF:000001">
    <property type="entry name" value="Carbamoyl-phosphate synthase large chain"/>
    <property type="match status" value="1"/>
</dbReference>
<dbReference type="FunFam" id="3.40.50.20:FF:000003">
    <property type="entry name" value="Carbamoyl-phosphate synthase large chain"/>
    <property type="match status" value="1"/>
</dbReference>
<dbReference type="Gene3D" id="3.40.50.20">
    <property type="match status" value="2"/>
</dbReference>
<dbReference type="Gene3D" id="3.30.470.20">
    <property type="entry name" value="ATP-grasp fold, B domain"/>
    <property type="match status" value="2"/>
</dbReference>
<dbReference type="Gene3D" id="1.10.1030.10">
    <property type="entry name" value="Carbamoyl-phosphate synthetase, large subunit oligomerisation domain"/>
    <property type="match status" value="1"/>
</dbReference>
<dbReference type="Gene3D" id="3.40.50.1380">
    <property type="entry name" value="Methylglyoxal synthase-like domain"/>
    <property type="match status" value="1"/>
</dbReference>
<dbReference type="HAMAP" id="MF_01210_A">
    <property type="entry name" value="CPSase_L_chain_A"/>
    <property type="match status" value="1"/>
</dbReference>
<dbReference type="HAMAP" id="MF_01210_B">
    <property type="entry name" value="CPSase_L_chain_B"/>
    <property type="match status" value="1"/>
</dbReference>
<dbReference type="InterPro" id="IPR011761">
    <property type="entry name" value="ATP-grasp"/>
</dbReference>
<dbReference type="InterPro" id="IPR006275">
    <property type="entry name" value="CarbamoylP_synth_lsu"/>
</dbReference>
<dbReference type="InterPro" id="IPR005480">
    <property type="entry name" value="CarbamoylP_synth_lsu_oligo"/>
</dbReference>
<dbReference type="InterPro" id="IPR036897">
    <property type="entry name" value="CarbamoylP_synth_lsu_oligo_sf"/>
</dbReference>
<dbReference type="InterPro" id="IPR005479">
    <property type="entry name" value="CbamoylP_synth_lsu-like_ATP-bd"/>
</dbReference>
<dbReference type="InterPro" id="IPR005483">
    <property type="entry name" value="CbamoylP_synth_lsu_CPSase_dom"/>
</dbReference>
<dbReference type="InterPro" id="IPR011607">
    <property type="entry name" value="MGS-like_dom"/>
</dbReference>
<dbReference type="InterPro" id="IPR036914">
    <property type="entry name" value="MGS-like_dom_sf"/>
</dbReference>
<dbReference type="InterPro" id="IPR033937">
    <property type="entry name" value="MGS_CPS_CarB"/>
</dbReference>
<dbReference type="InterPro" id="IPR016185">
    <property type="entry name" value="PreATP-grasp_dom_sf"/>
</dbReference>
<dbReference type="NCBIfam" id="TIGR01369">
    <property type="entry name" value="CPSaseII_lrg"/>
    <property type="match status" value="1"/>
</dbReference>
<dbReference type="NCBIfam" id="NF003671">
    <property type="entry name" value="PRK05294.1"/>
    <property type="match status" value="1"/>
</dbReference>
<dbReference type="NCBIfam" id="NF009455">
    <property type="entry name" value="PRK12815.1"/>
    <property type="match status" value="1"/>
</dbReference>
<dbReference type="PANTHER" id="PTHR11405:SF53">
    <property type="entry name" value="CARBAMOYL-PHOSPHATE SYNTHASE [AMMONIA], MITOCHONDRIAL"/>
    <property type="match status" value="1"/>
</dbReference>
<dbReference type="PANTHER" id="PTHR11405">
    <property type="entry name" value="CARBAMOYLTRANSFERASE FAMILY MEMBER"/>
    <property type="match status" value="1"/>
</dbReference>
<dbReference type="Pfam" id="PF02786">
    <property type="entry name" value="CPSase_L_D2"/>
    <property type="match status" value="2"/>
</dbReference>
<dbReference type="Pfam" id="PF02787">
    <property type="entry name" value="CPSase_L_D3"/>
    <property type="match status" value="1"/>
</dbReference>
<dbReference type="Pfam" id="PF02142">
    <property type="entry name" value="MGS"/>
    <property type="match status" value="1"/>
</dbReference>
<dbReference type="PRINTS" id="PR00098">
    <property type="entry name" value="CPSASE"/>
</dbReference>
<dbReference type="SMART" id="SM01096">
    <property type="entry name" value="CPSase_L_D3"/>
    <property type="match status" value="1"/>
</dbReference>
<dbReference type="SMART" id="SM00851">
    <property type="entry name" value="MGS"/>
    <property type="match status" value="1"/>
</dbReference>
<dbReference type="SUPFAM" id="SSF48108">
    <property type="entry name" value="Carbamoyl phosphate synthetase, large subunit connection domain"/>
    <property type="match status" value="1"/>
</dbReference>
<dbReference type="SUPFAM" id="SSF56059">
    <property type="entry name" value="Glutathione synthetase ATP-binding domain-like"/>
    <property type="match status" value="2"/>
</dbReference>
<dbReference type="SUPFAM" id="SSF52335">
    <property type="entry name" value="Methylglyoxal synthase-like"/>
    <property type="match status" value="1"/>
</dbReference>
<dbReference type="SUPFAM" id="SSF52440">
    <property type="entry name" value="PreATP-grasp domain"/>
    <property type="match status" value="2"/>
</dbReference>
<dbReference type="PROSITE" id="PS50975">
    <property type="entry name" value="ATP_GRASP"/>
    <property type="match status" value="2"/>
</dbReference>
<dbReference type="PROSITE" id="PS00866">
    <property type="entry name" value="CPSASE_1"/>
    <property type="match status" value="2"/>
</dbReference>
<dbReference type="PROSITE" id="PS00867">
    <property type="entry name" value="CPSASE_2"/>
    <property type="match status" value="2"/>
</dbReference>
<dbReference type="PROSITE" id="PS51855">
    <property type="entry name" value="MGS"/>
    <property type="match status" value="1"/>
</dbReference>
<evidence type="ECO:0000255" key="1">
    <source>
        <dbReference type="HAMAP-Rule" id="MF_01210"/>
    </source>
</evidence>
<gene>
    <name evidence="1" type="primary">carB</name>
    <name type="ordered locus">VV1_0565</name>
</gene>
<organism>
    <name type="scientific">Vibrio vulnificus (strain CMCP6)</name>
    <dbReference type="NCBI Taxonomy" id="216895"/>
    <lineage>
        <taxon>Bacteria</taxon>
        <taxon>Pseudomonadati</taxon>
        <taxon>Pseudomonadota</taxon>
        <taxon>Gammaproteobacteria</taxon>
        <taxon>Vibrionales</taxon>
        <taxon>Vibrionaceae</taxon>
        <taxon>Vibrio</taxon>
    </lineage>
</organism>
<accession>Q8DEM2</accession>
<feature type="chain" id="PRO_0000145063" description="Carbamoyl phosphate synthase large chain">
    <location>
        <begin position="1"/>
        <end position="1077"/>
    </location>
</feature>
<feature type="domain" description="ATP-grasp 1" evidence="1">
    <location>
        <begin position="133"/>
        <end position="328"/>
    </location>
</feature>
<feature type="domain" description="ATP-grasp 2" evidence="1">
    <location>
        <begin position="678"/>
        <end position="869"/>
    </location>
</feature>
<feature type="domain" description="MGS-like" evidence="1">
    <location>
        <begin position="936"/>
        <end position="1077"/>
    </location>
</feature>
<feature type="region of interest" description="Carboxyphosphate synthetic domain" evidence="1">
    <location>
        <begin position="1"/>
        <end position="403"/>
    </location>
</feature>
<feature type="region of interest" description="Oligomerization domain" evidence="1">
    <location>
        <begin position="404"/>
        <end position="553"/>
    </location>
</feature>
<feature type="region of interest" description="Carbamoyl phosphate synthetic domain" evidence="1">
    <location>
        <begin position="554"/>
        <end position="935"/>
    </location>
</feature>
<feature type="region of interest" description="Allosteric domain" evidence="1">
    <location>
        <begin position="936"/>
        <end position="1077"/>
    </location>
</feature>
<feature type="binding site" evidence="1">
    <location>
        <position position="129"/>
    </location>
    <ligand>
        <name>ATP</name>
        <dbReference type="ChEBI" id="CHEBI:30616"/>
        <label>1</label>
    </ligand>
</feature>
<feature type="binding site" evidence="1">
    <location>
        <position position="169"/>
    </location>
    <ligand>
        <name>ATP</name>
        <dbReference type="ChEBI" id="CHEBI:30616"/>
        <label>1</label>
    </ligand>
</feature>
<feature type="binding site" evidence="1">
    <location>
        <position position="175"/>
    </location>
    <ligand>
        <name>ATP</name>
        <dbReference type="ChEBI" id="CHEBI:30616"/>
        <label>1</label>
    </ligand>
</feature>
<feature type="binding site" evidence="1">
    <location>
        <position position="176"/>
    </location>
    <ligand>
        <name>ATP</name>
        <dbReference type="ChEBI" id="CHEBI:30616"/>
        <label>1</label>
    </ligand>
</feature>
<feature type="binding site" evidence="1">
    <location>
        <position position="208"/>
    </location>
    <ligand>
        <name>ATP</name>
        <dbReference type="ChEBI" id="CHEBI:30616"/>
        <label>1</label>
    </ligand>
</feature>
<feature type="binding site" evidence="1">
    <location>
        <position position="210"/>
    </location>
    <ligand>
        <name>ATP</name>
        <dbReference type="ChEBI" id="CHEBI:30616"/>
        <label>1</label>
    </ligand>
</feature>
<feature type="binding site" evidence="1">
    <location>
        <position position="215"/>
    </location>
    <ligand>
        <name>ATP</name>
        <dbReference type="ChEBI" id="CHEBI:30616"/>
        <label>1</label>
    </ligand>
</feature>
<feature type="binding site" evidence="1">
    <location>
        <position position="241"/>
    </location>
    <ligand>
        <name>ATP</name>
        <dbReference type="ChEBI" id="CHEBI:30616"/>
        <label>1</label>
    </ligand>
</feature>
<feature type="binding site" evidence="1">
    <location>
        <position position="242"/>
    </location>
    <ligand>
        <name>ATP</name>
        <dbReference type="ChEBI" id="CHEBI:30616"/>
        <label>1</label>
    </ligand>
</feature>
<feature type="binding site" evidence="1">
    <location>
        <position position="243"/>
    </location>
    <ligand>
        <name>ATP</name>
        <dbReference type="ChEBI" id="CHEBI:30616"/>
        <label>1</label>
    </ligand>
</feature>
<feature type="binding site" evidence="1">
    <location>
        <position position="285"/>
    </location>
    <ligand>
        <name>ATP</name>
        <dbReference type="ChEBI" id="CHEBI:30616"/>
        <label>1</label>
    </ligand>
</feature>
<feature type="binding site" evidence="1">
    <location>
        <position position="285"/>
    </location>
    <ligand>
        <name>Mg(2+)</name>
        <dbReference type="ChEBI" id="CHEBI:18420"/>
        <label>1</label>
    </ligand>
</feature>
<feature type="binding site" evidence="1">
    <location>
        <position position="285"/>
    </location>
    <ligand>
        <name>Mn(2+)</name>
        <dbReference type="ChEBI" id="CHEBI:29035"/>
        <label>1</label>
    </ligand>
</feature>
<feature type="binding site" evidence="1">
    <location>
        <position position="299"/>
    </location>
    <ligand>
        <name>ATP</name>
        <dbReference type="ChEBI" id="CHEBI:30616"/>
        <label>1</label>
    </ligand>
</feature>
<feature type="binding site" evidence="1">
    <location>
        <position position="299"/>
    </location>
    <ligand>
        <name>Mg(2+)</name>
        <dbReference type="ChEBI" id="CHEBI:18420"/>
        <label>1</label>
    </ligand>
</feature>
<feature type="binding site" evidence="1">
    <location>
        <position position="299"/>
    </location>
    <ligand>
        <name>Mg(2+)</name>
        <dbReference type="ChEBI" id="CHEBI:18420"/>
        <label>2</label>
    </ligand>
</feature>
<feature type="binding site" evidence="1">
    <location>
        <position position="299"/>
    </location>
    <ligand>
        <name>Mn(2+)</name>
        <dbReference type="ChEBI" id="CHEBI:29035"/>
        <label>1</label>
    </ligand>
</feature>
<feature type="binding site" evidence="1">
    <location>
        <position position="299"/>
    </location>
    <ligand>
        <name>Mn(2+)</name>
        <dbReference type="ChEBI" id="CHEBI:29035"/>
        <label>2</label>
    </ligand>
</feature>
<feature type="binding site" evidence="1">
    <location>
        <position position="301"/>
    </location>
    <ligand>
        <name>Mg(2+)</name>
        <dbReference type="ChEBI" id="CHEBI:18420"/>
        <label>2</label>
    </ligand>
</feature>
<feature type="binding site" evidence="1">
    <location>
        <position position="301"/>
    </location>
    <ligand>
        <name>Mn(2+)</name>
        <dbReference type="ChEBI" id="CHEBI:29035"/>
        <label>2</label>
    </ligand>
</feature>
<feature type="binding site" evidence="1">
    <location>
        <position position="714"/>
    </location>
    <ligand>
        <name>ATP</name>
        <dbReference type="ChEBI" id="CHEBI:30616"/>
        <label>2</label>
    </ligand>
</feature>
<feature type="binding site" evidence="1">
    <location>
        <position position="753"/>
    </location>
    <ligand>
        <name>ATP</name>
        <dbReference type="ChEBI" id="CHEBI:30616"/>
        <label>2</label>
    </ligand>
</feature>
<feature type="binding site" evidence="1">
    <location>
        <position position="755"/>
    </location>
    <ligand>
        <name>ATP</name>
        <dbReference type="ChEBI" id="CHEBI:30616"/>
        <label>2</label>
    </ligand>
</feature>
<feature type="binding site" evidence="1">
    <location>
        <position position="760"/>
    </location>
    <ligand>
        <name>ATP</name>
        <dbReference type="ChEBI" id="CHEBI:30616"/>
        <label>2</label>
    </ligand>
</feature>
<feature type="binding site" evidence="1">
    <location>
        <position position="785"/>
    </location>
    <ligand>
        <name>ATP</name>
        <dbReference type="ChEBI" id="CHEBI:30616"/>
        <label>2</label>
    </ligand>
</feature>
<feature type="binding site" evidence="1">
    <location>
        <position position="786"/>
    </location>
    <ligand>
        <name>ATP</name>
        <dbReference type="ChEBI" id="CHEBI:30616"/>
        <label>2</label>
    </ligand>
</feature>
<feature type="binding site" evidence="1">
    <location>
        <position position="787"/>
    </location>
    <ligand>
        <name>ATP</name>
        <dbReference type="ChEBI" id="CHEBI:30616"/>
        <label>2</label>
    </ligand>
</feature>
<feature type="binding site" evidence="1">
    <location>
        <position position="788"/>
    </location>
    <ligand>
        <name>ATP</name>
        <dbReference type="ChEBI" id="CHEBI:30616"/>
        <label>2</label>
    </ligand>
</feature>
<feature type="binding site" evidence="1">
    <location>
        <position position="828"/>
    </location>
    <ligand>
        <name>ATP</name>
        <dbReference type="ChEBI" id="CHEBI:30616"/>
        <label>2</label>
    </ligand>
</feature>
<feature type="binding site" evidence="1">
    <location>
        <position position="828"/>
    </location>
    <ligand>
        <name>Mg(2+)</name>
        <dbReference type="ChEBI" id="CHEBI:18420"/>
        <label>3</label>
    </ligand>
</feature>
<feature type="binding site" evidence="1">
    <location>
        <position position="828"/>
    </location>
    <ligand>
        <name>Mn(2+)</name>
        <dbReference type="ChEBI" id="CHEBI:29035"/>
        <label>3</label>
    </ligand>
</feature>
<feature type="binding site" evidence="1">
    <location>
        <position position="840"/>
    </location>
    <ligand>
        <name>ATP</name>
        <dbReference type="ChEBI" id="CHEBI:30616"/>
        <label>2</label>
    </ligand>
</feature>
<feature type="binding site" evidence="1">
    <location>
        <position position="840"/>
    </location>
    <ligand>
        <name>Mg(2+)</name>
        <dbReference type="ChEBI" id="CHEBI:18420"/>
        <label>3</label>
    </ligand>
</feature>
<feature type="binding site" evidence="1">
    <location>
        <position position="840"/>
    </location>
    <ligand>
        <name>Mg(2+)</name>
        <dbReference type="ChEBI" id="CHEBI:18420"/>
        <label>4</label>
    </ligand>
</feature>
<feature type="binding site" evidence="1">
    <location>
        <position position="840"/>
    </location>
    <ligand>
        <name>Mn(2+)</name>
        <dbReference type="ChEBI" id="CHEBI:29035"/>
        <label>3</label>
    </ligand>
</feature>
<feature type="binding site" evidence="1">
    <location>
        <position position="840"/>
    </location>
    <ligand>
        <name>Mn(2+)</name>
        <dbReference type="ChEBI" id="CHEBI:29035"/>
        <label>4</label>
    </ligand>
</feature>
<feature type="binding site" evidence="1">
    <location>
        <position position="842"/>
    </location>
    <ligand>
        <name>Mg(2+)</name>
        <dbReference type="ChEBI" id="CHEBI:18420"/>
        <label>4</label>
    </ligand>
</feature>
<feature type="binding site" evidence="1">
    <location>
        <position position="842"/>
    </location>
    <ligand>
        <name>Mn(2+)</name>
        <dbReference type="ChEBI" id="CHEBI:29035"/>
        <label>4</label>
    </ligand>
</feature>
<protein>
    <recommendedName>
        <fullName evidence="1">Carbamoyl phosphate synthase large chain</fullName>
        <ecNumber evidence="1">6.3.4.16</ecNumber>
        <ecNumber evidence="1">6.3.5.5</ecNumber>
    </recommendedName>
    <alternativeName>
        <fullName evidence="1">Carbamoyl phosphate synthetase ammonia chain</fullName>
    </alternativeName>
</protein>